<feature type="chain" id="PRO_1000164050" description="Acetyl-coenzyme A synthetase">
    <location>
        <begin position="1"/>
        <end position="652"/>
    </location>
</feature>
<feature type="binding site" evidence="1">
    <location>
        <begin position="190"/>
        <end position="193"/>
    </location>
    <ligand>
        <name>CoA</name>
        <dbReference type="ChEBI" id="CHEBI:57287"/>
    </ligand>
</feature>
<feature type="binding site" evidence="1">
    <location>
        <position position="310"/>
    </location>
    <ligand>
        <name>CoA</name>
        <dbReference type="ChEBI" id="CHEBI:57287"/>
    </ligand>
</feature>
<feature type="binding site" evidence="1">
    <location>
        <begin position="386"/>
        <end position="388"/>
    </location>
    <ligand>
        <name>ATP</name>
        <dbReference type="ChEBI" id="CHEBI:30616"/>
    </ligand>
</feature>
<feature type="binding site" evidence="1">
    <location>
        <begin position="410"/>
        <end position="415"/>
    </location>
    <ligand>
        <name>ATP</name>
        <dbReference type="ChEBI" id="CHEBI:30616"/>
    </ligand>
</feature>
<feature type="binding site" evidence="1">
    <location>
        <position position="499"/>
    </location>
    <ligand>
        <name>ATP</name>
        <dbReference type="ChEBI" id="CHEBI:30616"/>
    </ligand>
</feature>
<feature type="binding site" evidence="1">
    <location>
        <position position="514"/>
    </location>
    <ligand>
        <name>ATP</name>
        <dbReference type="ChEBI" id="CHEBI:30616"/>
    </ligand>
</feature>
<feature type="binding site" evidence="1">
    <location>
        <position position="522"/>
    </location>
    <ligand>
        <name>CoA</name>
        <dbReference type="ChEBI" id="CHEBI:57287"/>
    </ligand>
</feature>
<feature type="binding site" evidence="1">
    <location>
        <position position="525"/>
    </location>
    <ligand>
        <name>ATP</name>
        <dbReference type="ChEBI" id="CHEBI:30616"/>
    </ligand>
</feature>
<feature type="binding site" evidence="1">
    <location>
        <position position="536"/>
    </location>
    <ligand>
        <name>Mg(2+)</name>
        <dbReference type="ChEBI" id="CHEBI:18420"/>
    </ligand>
</feature>
<feature type="binding site" evidence="1">
    <location>
        <position position="538"/>
    </location>
    <ligand>
        <name>Mg(2+)</name>
        <dbReference type="ChEBI" id="CHEBI:18420"/>
    </ligand>
</feature>
<feature type="binding site" evidence="1">
    <location>
        <position position="541"/>
    </location>
    <ligand>
        <name>Mg(2+)</name>
        <dbReference type="ChEBI" id="CHEBI:18420"/>
    </ligand>
</feature>
<feature type="binding site" evidence="1">
    <location>
        <position position="583"/>
    </location>
    <ligand>
        <name>CoA</name>
        <dbReference type="ChEBI" id="CHEBI:57287"/>
    </ligand>
</feature>
<feature type="modified residue" description="N6-acetyllysine" evidence="1">
    <location>
        <position position="608"/>
    </location>
</feature>
<name>ACSA_METC4</name>
<dbReference type="EC" id="6.2.1.1" evidence="1"/>
<dbReference type="EMBL" id="CP001298">
    <property type="protein sequence ID" value="ACK83624.1"/>
    <property type="molecule type" value="Genomic_DNA"/>
</dbReference>
<dbReference type="RefSeq" id="WP_015951093.1">
    <property type="nucleotide sequence ID" value="NC_011757.1"/>
</dbReference>
<dbReference type="SMR" id="B7KPN8"/>
<dbReference type="KEGG" id="mch:Mchl_2785"/>
<dbReference type="HOGENOM" id="CLU_000022_3_6_5"/>
<dbReference type="Proteomes" id="UP000002385">
    <property type="component" value="Chromosome"/>
</dbReference>
<dbReference type="GO" id="GO:0005829">
    <property type="term" value="C:cytosol"/>
    <property type="evidence" value="ECO:0007669"/>
    <property type="project" value="TreeGrafter"/>
</dbReference>
<dbReference type="GO" id="GO:0003987">
    <property type="term" value="F:acetate-CoA ligase activity"/>
    <property type="evidence" value="ECO:0007669"/>
    <property type="project" value="UniProtKB-UniRule"/>
</dbReference>
<dbReference type="GO" id="GO:0016208">
    <property type="term" value="F:AMP binding"/>
    <property type="evidence" value="ECO:0007669"/>
    <property type="project" value="InterPro"/>
</dbReference>
<dbReference type="GO" id="GO:0005524">
    <property type="term" value="F:ATP binding"/>
    <property type="evidence" value="ECO:0007669"/>
    <property type="project" value="UniProtKB-KW"/>
</dbReference>
<dbReference type="GO" id="GO:0046872">
    <property type="term" value="F:metal ion binding"/>
    <property type="evidence" value="ECO:0007669"/>
    <property type="project" value="UniProtKB-KW"/>
</dbReference>
<dbReference type="GO" id="GO:0019427">
    <property type="term" value="P:acetyl-CoA biosynthetic process from acetate"/>
    <property type="evidence" value="ECO:0007669"/>
    <property type="project" value="InterPro"/>
</dbReference>
<dbReference type="CDD" id="cd05966">
    <property type="entry name" value="ACS"/>
    <property type="match status" value="1"/>
</dbReference>
<dbReference type="FunFam" id="3.30.300.30:FF:000004">
    <property type="entry name" value="Acetyl-coenzyme A synthetase"/>
    <property type="match status" value="1"/>
</dbReference>
<dbReference type="FunFam" id="3.40.50.12780:FF:000001">
    <property type="entry name" value="Acetyl-coenzyme A synthetase"/>
    <property type="match status" value="1"/>
</dbReference>
<dbReference type="Gene3D" id="3.30.300.30">
    <property type="match status" value="1"/>
</dbReference>
<dbReference type="Gene3D" id="3.40.50.12780">
    <property type="entry name" value="N-terminal domain of ligase-like"/>
    <property type="match status" value="1"/>
</dbReference>
<dbReference type="HAMAP" id="MF_01123">
    <property type="entry name" value="Ac_CoA_synth"/>
    <property type="match status" value="1"/>
</dbReference>
<dbReference type="InterPro" id="IPR011904">
    <property type="entry name" value="Ac_CoA_lig"/>
</dbReference>
<dbReference type="InterPro" id="IPR032387">
    <property type="entry name" value="ACAS_N"/>
</dbReference>
<dbReference type="InterPro" id="IPR025110">
    <property type="entry name" value="AMP-bd_C"/>
</dbReference>
<dbReference type="InterPro" id="IPR045851">
    <property type="entry name" value="AMP-bd_C_sf"/>
</dbReference>
<dbReference type="InterPro" id="IPR020845">
    <property type="entry name" value="AMP-binding_CS"/>
</dbReference>
<dbReference type="InterPro" id="IPR000873">
    <property type="entry name" value="AMP-dep_synth/lig_dom"/>
</dbReference>
<dbReference type="InterPro" id="IPR042099">
    <property type="entry name" value="ANL_N_sf"/>
</dbReference>
<dbReference type="NCBIfam" id="TIGR02188">
    <property type="entry name" value="Ac_CoA_lig_AcsA"/>
    <property type="match status" value="1"/>
</dbReference>
<dbReference type="NCBIfam" id="NF001208">
    <property type="entry name" value="PRK00174.1"/>
    <property type="match status" value="1"/>
</dbReference>
<dbReference type="PANTHER" id="PTHR24095">
    <property type="entry name" value="ACETYL-COENZYME A SYNTHETASE"/>
    <property type="match status" value="1"/>
</dbReference>
<dbReference type="PANTHER" id="PTHR24095:SF14">
    <property type="entry name" value="ACETYL-COENZYME A SYNTHETASE 1"/>
    <property type="match status" value="1"/>
</dbReference>
<dbReference type="Pfam" id="PF16177">
    <property type="entry name" value="ACAS_N"/>
    <property type="match status" value="1"/>
</dbReference>
<dbReference type="Pfam" id="PF00501">
    <property type="entry name" value="AMP-binding"/>
    <property type="match status" value="1"/>
</dbReference>
<dbReference type="Pfam" id="PF13193">
    <property type="entry name" value="AMP-binding_C"/>
    <property type="match status" value="1"/>
</dbReference>
<dbReference type="SUPFAM" id="SSF56801">
    <property type="entry name" value="Acetyl-CoA synthetase-like"/>
    <property type="match status" value="1"/>
</dbReference>
<dbReference type="PROSITE" id="PS00455">
    <property type="entry name" value="AMP_BINDING"/>
    <property type="match status" value="1"/>
</dbReference>
<comment type="function">
    <text evidence="1">Catalyzes the conversion of acetate into acetyl-CoA (AcCoA), an essential intermediate at the junction of anabolic and catabolic pathways. AcsA undergoes a two-step reaction. In the first half reaction, AcsA combines acetate with ATP to form acetyl-adenylate (AcAMP) intermediate. In the second half reaction, it can then transfer the acetyl group from AcAMP to the sulfhydryl group of CoA, forming the product AcCoA.</text>
</comment>
<comment type="catalytic activity">
    <reaction evidence="1">
        <text>acetate + ATP + CoA = acetyl-CoA + AMP + diphosphate</text>
        <dbReference type="Rhea" id="RHEA:23176"/>
        <dbReference type="ChEBI" id="CHEBI:30089"/>
        <dbReference type="ChEBI" id="CHEBI:30616"/>
        <dbReference type="ChEBI" id="CHEBI:33019"/>
        <dbReference type="ChEBI" id="CHEBI:57287"/>
        <dbReference type="ChEBI" id="CHEBI:57288"/>
        <dbReference type="ChEBI" id="CHEBI:456215"/>
        <dbReference type="EC" id="6.2.1.1"/>
    </reaction>
</comment>
<comment type="cofactor">
    <cofactor evidence="1">
        <name>Mg(2+)</name>
        <dbReference type="ChEBI" id="CHEBI:18420"/>
    </cofactor>
</comment>
<comment type="PTM">
    <text evidence="1">Acetylated. Deacetylation by the SIR2-homolog deacetylase activates the enzyme.</text>
</comment>
<comment type="similarity">
    <text evidence="1">Belongs to the ATP-dependent AMP-binding enzyme family.</text>
</comment>
<keyword id="KW-0007">Acetylation</keyword>
<keyword id="KW-0067">ATP-binding</keyword>
<keyword id="KW-0436">Ligase</keyword>
<keyword id="KW-0460">Magnesium</keyword>
<keyword id="KW-0479">Metal-binding</keyword>
<keyword id="KW-0547">Nucleotide-binding</keyword>
<sequence length="652" mass="72190">MSEKVIDVQDAWRDRALIDEAKYKEMYEASVSDPETFWGEHGKRIDWSTPFSKVKNTSFAPGDVSIKWFEDGRTNVALNCIDRHLATRGDQTAIIWEGDDPNESKHITYRQLHAEVCRMANVLRNRGVGKGDRVTLYLPMIPEAAYAMLACARLGAIHAIVFGGFSPDSLASRIKGCGSKLVITADEGLRGGRKVPLKANVDEAIKRLDKDLVDHVIVVKRTGGNVAMEPGRDVYYHEAAEQVTDECPAEAVEAEHPLFILYTSGSTGQPKGVVHTTGGYLVYASMTHQYVFDYHDGEVYWCTADVGWVTGHSYIVYGPLANGATTLMFEGIPTYPSNSRFWEVIDKHKVNIFYTAPTAIRSLMGGGEGPVKKTSRQSLRVLGSVGEPINPEAWDWYYRVVGDSRCPIVDTWWQTETGGILITPLPGATRLKPGSATLPFFGVQPVMVDAEGKILDGACEGNLCIKDSWPGQMRTVYGDHERFEQTYFSTYKDLYFTGDGARRDADGYYWITGRVDDVINVSGHRMGTAEVESSLVAHPKVSEAAVVGYPHNVKGQGIYAYVTLNEGEEGTDELRKELVTWVRKDIGPIASPDLLQFAPGLPKTRSGKIMRRILRKIAEDDFGSLGDTSTLAEPAVVDDLIENRQNRQNRSA</sequence>
<organism>
    <name type="scientific">Methylorubrum extorquens (strain CM4 / NCIMB 13688)</name>
    <name type="common">Methylobacterium extorquens</name>
    <dbReference type="NCBI Taxonomy" id="440085"/>
    <lineage>
        <taxon>Bacteria</taxon>
        <taxon>Pseudomonadati</taxon>
        <taxon>Pseudomonadota</taxon>
        <taxon>Alphaproteobacteria</taxon>
        <taxon>Hyphomicrobiales</taxon>
        <taxon>Methylobacteriaceae</taxon>
        <taxon>Methylorubrum</taxon>
    </lineage>
</organism>
<gene>
    <name evidence="1" type="primary">acsA</name>
    <name type="ordered locus">Mchl_2785</name>
</gene>
<reference key="1">
    <citation type="submission" date="2008-12" db="EMBL/GenBank/DDBJ databases">
        <title>Complete sequence of chromosome of Methylobacterium chloromethanicum CM4.</title>
        <authorList>
            <consortium name="US DOE Joint Genome Institute"/>
            <person name="Lucas S."/>
            <person name="Copeland A."/>
            <person name="Lapidus A."/>
            <person name="Glavina del Rio T."/>
            <person name="Dalin E."/>
            <person name="Tice H."/>
            <person name="Bruce D."/>
            <person name="Goodwin L."/>
            <person name="Pitluck S."/>
            <person name="Chertkov O."/>
            <person name="Brettin T."/>
            <person name="Detter J.C."/>
            <person name="Han C."/>
            <person name="Larimer F."/>
            <person name="Land M."/>
            <person name="Hauser L."/>
            <person name="Kyrpides N."/>
            <person name="Mikhailova N."/>
            <person name="Marx C."/>
            <person name="Richardson P."/>
        </authorList>
    </citation>
    <scope>NUCLEOTIDE SEQUENCE [LARGE SCALE GENOMIC DNA]</scope>
    <source>
        <strain>CM4 / NCIMB 13688</strain>
    </source>
</reference>
<evidence type="ECO:0000255" key="1">
    <source>
        <dbReference type="HAMAP-Rule" id="MF_01123"/>
    </source>
</evidence>
<proteinExistence type="inferred from homology"/>
<protein>
    <recommendedName>
        <fullName evidence="1">Acetyl-coenzyme A synthetase</fullName>
        <shortName evidence="1">AcCoA synthetase</shortName>
        <shortName evidence="1">Acs</shortName>
        <ecNumber evidence="1">6.2.1.1</ecNumber>
    </recommendedName>
    <alternativeName>
        <fullName evidence="1">Acetate--CoA ligase</fullName>
    </alternativeName>
    <alternativeName>
        <fullName evidence="1">Acyl-activating enzyme</fullName>
    </alternativeName>
</protein>
<accession>B7KPN8</accession>